<organism>
    <name type="scientific">Yersinia pestis bv. Antiqua (strain Antiqua)</name>
    <dbReference type="NCBI Taxonomy" id="360102"/>
    <lineage>
        <taxon>Bacteria</taxon>
        <taxon>Pseudomonadati</taxon>
        <taxon>Pseudomonadota</taxon>
        <taxon>Gammaproteobacteria</taxon>
        <taxon>Enterobacterales</taxon>
        <taxon>Yersiniaceae</taxon>
        <taxon>Yersinia</taxon>
    </lineage>
</organism>
<evidence type="ECO:0000255" key="1">
    <source>
        <dbReference type="HAMAP-Rule" id="MF_00402"/>
    </source>
</evidence>
<evidence type="ECO:0000305" key="2"/>
<sequence length="115" mass="13090">MSNIIKQIEQEQMKQDVPAFRPGDSVEVKVWVVEGSKKRLQAFEGVVIAIRNRGLHSAFTVRKISNGEGVERVFQTHSPVIDSITVKRRGAVRQAKLYYLRERTGKSARIKERLG</sequence>
<dbReference type="EMBL" id="CP000308">
    <property type="protein sequence ID" value="ABG14814.1"/>
    <property type="molecule type" value="Genomic_DNA"/>
</dbReference>
<dbReference type="RefSeq" id="WP_002209461.1">
    <property type="nucleotide sequence ID" value="NZ_CP009906.1"/>
</dbReference>
<dbReference type="SMR" id="Q1C408"/>
<dbReference type="GeneID" id="96664344"/>
<dbReference type="KEGG" id="ypa:YPA_2852"/>
<dbReference type="Proteomes" id="UP000001971">
    <property type="component" value="Chromosome"/>
</dbReference>
<dbReference type="GO" id="GO:0022625">
    <property type="term" value="C:cytosolic large ribosomal subunit"/>
    <property type="evidence" value="ECO:0007669"/>
    <property type="project" value="TreeGrafter"/>
</dbReference>
<dbReference type="GO" id="GO:0003735">
    <property type="term" value="F:structural constituent of ribosome"/>
    <property type="evidence" value="ECO:0007669"/>
    <property type="project" value="InterPro"/>
</dbReference>
<dbReference type="GO" id="GO:0006412">
    <property type="term" value="P:translation"/>
    <property type="evidence" value="ECO:0007669"/>
    <property type="project" value="UniProtKB-UniRule"/>
</dbReference>
<dbReference type="FunFam" id="2.30.30.790:FF:000001">
    <property type="entry name" value="50S ribosomal protein L19"/>
    <property type="match status" value="1"/>
</dbReference>
<dbReference type="Gene3D" id="2.30.30.790">
    <property type="match status" value="1"/>
</dbReference>
<dbReference type="HAMAP" id="MF_00402">
    <property type="entry name" value="Ribosomal_bL19"/>
    <property type="match status" value="1"/>
</dbReference>
<dbReference type="InterPro" id="IPR001857">
    <property type="entry name" value="Ribosomal_bL19"/>
</dbReference>
<dbReference type="InterPro" id="IPR018257">
    <property type="entry name" value="Ribosomal_bL19_CS"/>
</dbReference>
<dbReference type="InterPro" id="IPR038657">
    <property type="entry name" value="Ribosomal_bL19_sf"/>
</dbReference>
<dbReference type="InterPro" id="IPR008991">
    <property type="entry name" value="Translation_prot_SH3-like_sf"/>
</dbReference>
<dbReference type="NCBIfam" id="TIGR01024">
    <property type="entry name" value="rplS_bact"/>
    <property type="match status" value="1"/>
</dbReference>
<dbReference type="PANTHER" id="PTHR15680:SF9">
    <property type="entry name" value="LARGE RIBOSOMAL SUBUNIT PROTEIN BL19M"/>
    <property type="match status" value="1"/>
</dbReference>
<dbReference type="PANTHER" id="PTHR15680">
    <property type="entry name" value="RIBOSOMAL PROTEIN L19"/>
    <property type="match status" value="1"/>
</dbReference>
<dbReference type="Pfam" id="PF01245">
    <property type="entry name" value="Ribosomal_L19"/>
    <property type="match status" value="1"/>
</dbReference>
<dbReference type="PIRSF" id="PIRSF002191">
    <property type="entry name" value="Ribosomal_L19"/>
    <property type="match status" value="1"/>
</dbReference>
<dbReference type="PRINTS" id="PR00061">
    <property type="entry name" value="RIBOSOMALL19"/>
</dbReference>
<dbReference type="SUPFAM" id="SSF50104">
    <property type="entry name" value="Translation proteins SH3-like domain"/>
    <property type="match status" value="1"/>
</dbReference>
<dbReference type="PROSITE" id="PS01015">
    <property type="entry name" value="RIBOSOMAL_L19"/>
    <property type="match status" value="1"/>
</dbReference>
<feature type="chain" id="PRO_1000049764" description="Large ribosomal subunit protein bL19">
    <location>
        <begin position="1"/>
        <end position="115"/>
    </location>
</feature>
<reference key="1">
    <citation type="journal article" date="2006" name="J. Bacteriol.">
        <title>Complete genome sequence of Yersinia pestis strains Antiqua and Nepal516: evidence of gene reduction in an emerging pathogen.</title>
        <authorList>
            <person name="Chain P.S.G."/>
            <person name="Hu P."/>
            <person name="Malfatti S.A."/>
            <person name="Radnedge L."/>
            <person name="Larimer F."/>
            <person name="Vergez L.M."/>
            <person name="Worsham P."/>
            <person name="Chu M.C."/>
            <person name="Andersen G.L."/>
        </authorList>
    </citation>
    <scope>NUCLEOTIDE SEQUENCE [LARGE SCALE GENOMIC DNA]</scope>
    <source>
        <strain>Antiqua</strain>
    </source>
</reference>
<gene>
    <name evidence="1" type="primary">rplS</name>
    <name type="ordered locus">YPA_2852</name>
</gene>
<proteinExistence type="inferred from homology"/>
<comment type="function">
    <text evidence="1">This protein is located at the 30S-50S ribosomal subunit interface and may play a role in the structure and function of the aminoacyl-tRNA binding site.</text>
</comment>
<comment type="similarity">
    <text evidence="1">Belongs to the bacterial ribosomal protein bL19 family.</text>
</comment>
<accession>Q1C408</accession>
<protein>
    <recommendedName>
        <fullName evidence="1">Large ribosomal subunit protein bL19</fullName>
    </recommendedName>
    <alternativeName>
        <fullName evidence="2">50S ribosomal protein L19</fullName>
    </alternativeName>
</protein>
<name>RL19_YERPA</name>
<keyword id="KW-0687">Ribonucleoprotein</keyword>
<keyword id="KW-0689">Ribosomal protein</keyword>